<accession>D9IA43</accession>
<organism>
    <name type="scientific">Stutzerimonas stutzeri</name>
    <name type="common">Pseudomonas stutzeri</name>
    <dbReference type="NCBI Taxonomy" id="316"/>
    <lineage>
        <taxon>Bacteria</taxon>
        <taxon>Pseudomonadati</taxon>
        <taxon>Pseudomonadota</taxon>
        <taxon>Gammaproteobacteria</taxon>
        <taxon>Pseudomonadales</taxon>
        <taxon>Pseudomonadaceae</taxon>
        <taxon>Stutzerimonas</taxon>
    </lineage>
</organism>
<evidence type="ECO:0000250" key="1">
    <source>
        <dbReference type="UniProtKB" id="P0ABI8"/>
    </source>
</evidence>
<evidence type="ECO:0000250" key="2">
    <source>
        <dbReference type="UniProtKB" id="Q05572"/>
    </source>
</evidence>
<evidence type="ECO:0000255" key="3"/>
<evidence type="ECO:0000255" key="4">
    <source>
        <dbReference type="RuleBase" id="RU000370"/>
    </source>
</evidence>
<evidence type="ECO:0000269" key="5">
    <source>
    </source>
</evidence>
<evidence type="ECO:0000303" key="6">
    <source>
    </source>
</evidence>
<evidence type="ECO:0000305" key="7"/>
<evidence type="ECO:0000312" key="8">
    <source>
        <dbReference type="EMBL" id="ADI99999.1"/>
    </source>
</evidence>
<evidence type="ECO:0000312" key="9">
    <source>
        <dbReference type="PDB" id="3MK7"/>
    </source>
</evidence>
<evidence type="ECO:0007744" key="10">
    <source>
        <dbReference type="PDB" id="3MK7"/>
    </source>
</evidence>
<evidence type="ECO:0007829" key="11">
    <source>
        <dbReference type="PDB" id="3MK7"/>
    </source>
</evidence>
<reference evidence="8 9" key="1">
    <citation type="journal article" date="2010" name="Science">
        <title>The structure of cbb3 cytochrome oxidase provides insights into proton pumping.</title>
        <authorList>
            <person name="Buschmann S."/>
            <person name="Warkentin E."/>
            <person name="Xie H."/>
            <person name="Langer J.D."/>
            <person name="Ermler U."/>
            <person name="Michel H."/>
        </authorList>
    </citation>
    <scope>NUCLEOTIDE SEQUENCE [GENOMIC DNA]</scope>
    <scope>PROTEIN SEQUENCE OF 2-12; 25-34; 60-66; 225-238; 262-271; 302-309; 335-352; 410-449 AND 457-474</scope>
    <scope>X-RAY CRYSTALLOGRAPHY (3.20 ANGSTROMS) OF 1-474 IN COMPLEX WITH HEME AND COPPER</scope>
    <scope>COFACTOR</scope>
    <scope>SUBUNIT</scope>
    <scope>IDENTIFICATION BY MASS SPECTROMETRY</scope>
    <source>
        <strain evidence="8">ATCC 14405 / JCM 20778 / CIP 107696 / IAM 12931 / LMG 2243 / NCIMB 568 / Baumann 218 / ZoBell 632</strain>
    </source>
</reference>
<dbReference type="EC" id="7.1.1.9" evidence="7"/>
<dbReference type="EMBL" id="HM130676">
    <property type="protein sequence ID" value="ADI99999.1"/>
    <property type="molecule type" value="Genomic_DNA"/>
</dbReference>
<dbReference type="PDB" id="3MK7">
    <property type="method" value="X-ray"/>
    <property type="resolution" value="3.20 A"/>
    <property type="chains" value="A/D/G/K=1-474"/>
</dbReference>
<dbReference type="PDB" id="5DJQ">
    <property type="method" value="X-ray"/>
    <property type="resolution" value="3.20 A"/>
    <property type="chains" value="A/D/G/K=1-474"/>
</dbReference>
<dbReference type="PDBsum" id="3MK7"/>
<dbReference type="PDBsum" id="5DJQ"/>
<dbReference type="SMR" id="D9IA43"/>
<dbReference type="eggNOG" id="COG3278">
    <property type="taxonomic scope" value="Bacteria"/>
</dbReference>
<dbReference type="UniPathway" id="UPA00705"/>
<dbReference type="EvolutionaryTrace" id="D9IA43"/>
<dbReference type="GO" id="GO:0070069">
    <property type="term" value="C:cytochrome complex"/>
    <property type="evidence" value="ECO:0000314"/>
    <property type="project" value="UniProtKB"/>
</dbReference>
<dbReference type="GO" id="GO:0005886">
    <property type="term" value="C:plasma membrane"/>
    <property type="evidence" value="ECO:0000250"/>
    <property type="project" value="UniProtKB"/>
</dbReference>
<dbReference type="GO" id="GO:0098803">
    <property type="term" value="C:respiratory chain complex"/>
    <property type="evidence" value="ECO:0000305"/>
    <property type="project" value="UniProtKB"/>
</dbReference>
<dbReference type="GO" id="GO:0005507">
    <property type="term" value="F:copper ion binding"/>
    <property type="evidence" value="ECO:0000314"/>
    <property type="project" value="UniProtKB"/>
</dbReference>
<dbReference type="GO" id="GO:0004129">
    <property type="term" value="F:cytochrome-c oxidase activity"/>
    <property type="evidence" value="ECO:0000305"/>
    <property type="project" value="UniProtKB"/>
</dbReference>
<dbReference type="GO" id="GO:0020037">
    <property type="term" value="F:heme binding"/>
    <property type="evidence" value="ECO:0000314"/>
    <property type="project" value="UniProtKB"/>
</dbReference>
<dbReference type="GO" id="GO:0005506">
    <property type="term" value="F:iron ion binding"/>
    <property type="evidence" value="ECO:0000314"/>
    <property type="project" value="UniProtKB"/>
</dbReference>
<dbReference type="GO" id="GO:0016705">
    <property type="term" value="F:oxidoreductase activity, acting on paired donors, with incorporation or reduction of molecular oxygen"/>
    <property type="evidence" value="ECO:0000305"/>
    <property type="project" value="UniProtKB"/>
</dbReference>
<dbReference type="GO" id="GO:0019825">
    <property type="term" value="F:oxygen binding"/>
    <property type="evidence" value="ECO:0000305"/>
    <property type="project" value="UniProtKB"/>
</dbReference>
<dbReference type="GO" id="GO:0008121">
    <property type="term" value="F:ubiquinol-cytochrome-c reductase activity"/>
    <property type="evidence" value="ECO:0000305"/>
    <property type="project" value="UniProtKB"/>
</dbReference>
<dbReference type="GO" id="GO:0019646">
    <property type="term" value="P:aerobic electron transport chain"/>
    <property type="evidence" value="ECO:0000305"/>
    <property type="project" value="UniProtKB"/>
</dbReference>
<dbReference type="GO" id="GO:0019411">
    <property type="term" value="P:aerobic respiration, using ferrous ions as electron donor"/>
    <property type="evidence" value="ECO:0000305"/>
    <property type="project" value="UniProtKB"/>
</dbReference>
<dbReference type="GO" id="GO:0015990">
    <property type="term" value="P:electron transport coupled proton transport"/>
    <property type="evidence" value="ECO:0000305"/>
    <property type="project" value="UniProtKB"/>
</dbReference>
<dbReference type="GO" id="GO:0006119">
    <property type="term" value="P:oxidative phosphorylation"/>
    <property type="evidence" value="ECO:0000305"/>
    <property type="project" value="UniProtKB"/>
</dbReference>
<dbReference type="GO" id="GO:1902600">
    <property type="term" value="P:proton transmembrane transport"/>
    <property type="evidence" value="ECO:0000305"/>
    <property type="project" value="UniProtKB"/>
</dbReference>
<dbReference type="CDD" id="cd01661">
    <property type="entry name" value="cbb3_Oxidase_I"/>
    <property type="match status" value="1"/>
</dbReference>
<dbReference type="FunFam" id="1.20.210.10:FF:000005">
    <property type="entry name" value="Cytochrome c oxidase, cbb3-type, subunit I"/>
    <property type="match status" value="1"/>
</dbReference>
<dbReference type="Gene3D" id="1.20.210.10">
    <property type="entry name" value="Cytochrome c oxidase-like, subunit I domain"/>
    <property type="match status" value="1"/>
</dbReference>
<dbReference type="InterPro" id="IPR023616">
    <property type="entry name" value="Cyt_c_oxase-like_su1_dom"/>
</dbReference>
<dbReference type="InterPro" id="IPR036927">
    <property type="entry name" value="Cyt_c_oxase-like_su1_sf"/>
</dbReference>
<dbReference type="InterPro" id="IPR000883">
    <property type="entry name" value="Cyt_C_Oxase_1"/>
</dbReference>
<dbReference type="InterPro" id="IPR023615">
    <property type="entry name" value="Cyt_c_Oxase_su1_BS"/>
</dbReference>
<dbReference type="InterPro" id="IPR004677">
    <property type="entry name" value="Cyt_c_oxidase_cbb3_su1"/>
</dbReference>
<dbReference type="NCBIfam" id="TIGR00780">
    <property type="entry name" value="ccoN"/>
    <property type="match status" value="1"/>
</dbReference>
<dbReference type="PANTHER" id="PTHR10422">
    <property type="entry name" value="CYTOCHROME C OXIDASE SUBUNIT 1"/>
    <property type="match status" value="1"/>
</dbReference>
<dbReference type="PANTHER" id="PTHR10422:SF29">
    <property type="entry name" value="CYTOCHROME C OXIDASE SUBUNIT 1 HOMOLOG, BACTEROID"/>
    <property type="match status" value="1"/>
</dbReference>
<dbReference type="Pfam" id="PF00115">
    <property type="entry name" value="COX1"/>
    <property type="match status" value="1"/>
</dbReference>
<dbReference type="SUPFAM" id="SSF81442">
    <property type="entry name" value="Cytochrome c oxidase subunit I-like"/>
    <property type="match status" value="1"/>
</dbReference>
<dbReference type="PROSITE" id="PS50855">
    <property type="entry name" value="COX1"/>
    <property type="match status" value="1"/>
</dbReference>
<dbReference type="PROSITE" id="PS00077">
    <property type="entry name" value="COX1_CUB"/>
    <property type="match status" value="1"/>
</dbReference>
<comment type="function">
    <text evidence="7">Cbb3-type cytochrome c oxidase is the component of the respiratory chain that catalyzes the reduction of oxygen to water. Subunits CcoN and CcoO form the functional core of the enzyme complex. Subunits CcoP and CcoQ may optionally bind to the core. CcoN is the catalytic subunit of the enzyme. Electrons originating in cytochrome c or a quinol are transferred to the bimetallic center formed by a high-spin heme and copper B. The complex also functions as a proton pump.</text>
</comment>
<comment type="catalytic activity">
    <reaction evidence="7">
        <text>4 Fe(II)-[cytochrome c] + O2 + 8 H(+)(in) = 4 Fe(III)-[cytochrome c] + 2 H2O + 4 H(+)(out)</text>
        <dbReference type="Rhea" id="RHEA:11436"/>
        <dbReference type="Rhea" id="RHEA-COMP:10350"/>
        <dbReference type="Rhea" id="RHEA-COMP:14399"/>
        <dbReference type="ChEBI" id="CHEBI:15377"/>
        <dbReference type="ChEBI" id="CHEBI:15378"/>
        <dbReference type="ChEBI" id="CHEBI:15379"/>
        <dbReference type="ChEBI" id="CHEBI:29033"/>
        <dbReference type="ChEBI" id="CHEBI:29034"/>
        <dbReference type="EC" id="7.1.1.9"/>
    </reaction>
</comment>
<comment type="cofactor">
    <cofactor evidence="5">
        <name>Cu(2+)</name>
        <dbReference type="ChEBI" id="CHEBI:29036"/>
    </cofactor>
    <text evidence="5">Binds 1 copper ion per subunit, denoted as copper B.</text>
</comment>
<comment type="cofactor">
    <cofactor evidence="5">
        <name>heme b</name>
        <dbReference type="ChEBI" id="CHEBI:60344"/>
    </cofactor>
    <text evidence="5">Binds 2 heme b groups per subunit, denoted as high- and low-spin.</text>
</comment>
<comment type="pathway">
    <text evidence="7">Energy metabolism; oxidative phosphorylation.</text>
</comment>
<comment type="subunit">
    <text evidence="5">Component of the cbb3-type cytochrome c oxidase at least composed of CcoN, CcoO, CcoQ and CcoP.</text>
</comment>
<comment type="subcellular location">
    <subcellularLocation>
        <location evidence="1">Cell inner membrane</location>
        <topology evidence="3">Multi-pass membrane protein</topology>
    </subcellularLocation>
</comment>
<comment type="similarity">
    <text evidence="4">Belongs to the heme-copper respiratory oxidase family.</text>
</comment>
<name>CCON1_STUST</name>
<gene>
    <name evidence="8" type="primary">ccoN1</name>
</gene>
<keyword id="KW-0002">3D-structure</keyword>
<keyword id="KW-0997">Cell inner membrane</keyword>
<keyword id="KW-1003">Cell membrane</keyword>
<keyword id="KW-0186">Copper</keyword>
<keyword id="KW-0903">Direct protein sequencing</keyword>
<keyword id="KW-0249">Electron transport</keyword>
<keyword id="KW-0349">Heme</keyword>
<keyword id="KW-0408">Iron</keyword>
<keyword id="KW-0472">Membrane</keyword>
<keyword id="KW-0479">Metal-binding</keyword>
<keyword id="KW-0679">Respiratory chain</keyword>
<keyword id="KW-1278">Translocase</keyword>
<keyword id="KW-0812">Transmembrane</keyword>
<keyword id="KW-1133">Transmembrane helix</keyword>
<keyword id="KW-0813">Transport</keyword>
<sequence length="474" mass="52789">MNTATSTAYSYKVVRQFAIMTVVWGIVGMGLGVFIAAQLAWPFLNFDLPWTSFGRLRPLHTNAVIFAFGGCALFATSYYSVQRTCQTTLFAPKLAAFTFWGWQLVILLAAISLPLGFTSSKEYAELEWPIDILITIVWVAYAVVFFGTLAKRKVKHIYVGNWFFGAFILTVAILHVVNNLEIPVTAMKSYSLYAGATDAMVQWWYGHNAVGFFLTAGFLGIMYYFVPKQAERPVYSYRLSIVHFWALITVYIWAGPHHLHYTALPDWAQSLGMVMSLILLAPSWGGMINGMMTLSGAWHKLRSDPILRFLVVSLAFYGMSTFEGPMMAIKTVNALSHYTDWTIGHVHAGALGWVAMVSIGALYHLVPKVFGREQMHSIGLINTHFWLATIGTVLYIASMWVNGIAQGLMWRAINDDGTLTYSFVESLEASHPGFVVRMIGGAIFFAGMLVMAYNTWRTVQAAKPAEYDAAAQIA</sequence>
<protein>
    <recommendedName>
        <fullName evidence="6 8">Cbb3-type cytochrome c oxidase subunit CcoN1</fullName>
        <ecNumber evidence="7">7.1.1.9</ecNumber>
    </recommendedName>
    <alternativeName>
        <fullName evidence="2 9">Cytochrome CBB3 subunit CcoN1</fullName>
    </alternativeName>
</protein>
<feature type="chain" id="PRO_0000433597" description="Cbb3-type cytochrome c oxidase subunit CcoN1">
    <location>
        <begin position="1"/>
        <end position="474"/>
    </location>
</feature>
<feature type="topological domain" description="Cytoplasmic" evidence="7">
    <location>
        <begin position="1"/>
        <end position="16"/>
    </location>
</feature>
<feature type="transmembrane region" description="Helical" evidence="3">
    <location>
        <begin position="17"/>
        <end position="37"/>
    </location>
</feature>
<feature type="topological domain" description="Periplasmic" evidence="7">
    <location>
        <begin position="38"/>
        <end position="60"/>
    </location>
</feature>
<feature type="transmembrane region" description="Helical" evidence="3">
    <location>
        <begin position="61"/>
        <end position="81"/>
    </location>
</feature>
<feature type="topological domain" description="Cytoplasmic" evidence="7">
    <location>
        <begin position="82"/>
        <end position="96"/>
    </location>
</feature>
<feature type="transmembrane region" description="Helical" evidence="3">
    <location>
        <begin position="97"/>
        <end position="117"/>
    </location>
</feature>
<feature type="topological domain" description="Periplasmic" evidence="7">
    <location>
        <begin position="118"/>
        <end position="129"/>
    </location>
</feature>
<feature type="transmembrane region" description="Helical" evidence="3">
    <location>
        <begin position="130"/>
        <end position="150"/>
    </location>
</feature>
<feature type="topological domain" description="Cytoplasmic" evidence="7">
    <location>
        <begin position="151"/>
        <end position="156"/>
    </location>
</feature>
<feature type="transmembrane region" description="Helical" evidence="3">
    <location>
        <begin position="157"/>
        <end position="177"/>
    </location>
</feature>
<feature type="topological domain" description="Periplasmic" evidence="7">
    <location>
        <begin position="178"/>
        <end position="205"/>
    </location>
</feature>
<feature type="transmembrane region" description="Helical" evidence="3">
    <location>
        <begin position="206"/>
        <end position="226"/>
    </location>
</feature>
<feature type="topological domain" description="Cytoplasmic" evidence="7">
    <location>
        <begin position="227"/>
        <end position="238"/>
    </location>
</feature>
<feature type="transmembrane region" description="Helical" evidence="3">
    <location>
        <begin position="239"/>
        <end position="259"/>
    </location>
</feature>
<feature type="topological domain" description="Periplasmic" evidence="7">
    <location>
        <begin position="260"/>
        <end position="270"/>
    </location>
</feature>
<feature type="transmembrane region" description="Helical" evidence="3">
    <location>
        <begin position="271"/>
        <end position="291"/>
    </location>
</feature>
<feature type="topological domain" description="Cytoplasmic" evidence="7">
    <location>
        <begin position="292"/>
        <end position="308"/>
    </location>
</feature>
<feature type="transmembrane region" description="Helical" evidence="3">
    <location>
        <begin position="309"/>
        <end position="329"/>
    </location>
</feature>
<feature type="topological domain" description="Periplasmic" evidence="7">
    <location>
        <begin position="330"/>
        <end position="345"/>
    </location>
</feature>
<feature type="transmembrane region" description="Helical" evidence="3">
    <location>
        <begin position="346"/>
        <end position="366"/>
    </location>
</feature>
<feature type="topological domain" description="Cytoplasmic" evidence="7">
    <location>
        <begin position="367"/>
        <end position="384"/>
    </location>
</feature>
<feature type="transmembrane region" description="Helical" evidence="3">
    <location>
        <begin position="385"/>
        <end position="405"/>
    </location>
</feature>
<feature type="topological domain" description="Periplasmic" evidence="7">
    <location>
        <begin position="406"/>
        <end position="432"/>
    </location>
</feature>
<feature type="transmembrane region" description="Helical" evidence="3">
    <location>
        <begin position="433"/>
        <end position="453"/>
    </location>
</feature>
<feature type="topological domain" description="Cytoplasmic" evidence="7">
    <location>
        <begin position="454"/>
        <end position="474"/>
    </location>
</feature>
<feature type="binding site" description="axial binding residue" evidence="5 10">
    <location>
        <position position="60"/>
    </location>
    <ligand>
        <name>heme b</name>
        <dbReference type="ChEBI" id="CHEBI:60344"/>
        <label>1; low-spin</label>
    </ligand>
    <ligandPart>
        <name>Fe</name>
        <dbReference type="ChEBI" id="CHEBI:18248"/>
    </ligandPart>
</feature>
<feature type="binding site" evidence="5 10">
    <location>
        <position position="207"/>
    </location>
    <ligand>
        <name>Cu cation</name>
        <dbReference type="ChEBI" id="CHEBI:23378"/>
        <label>B</label>
    </ligand>
</feature>
<feature type="binding site" evidence="5 10">
    <location>
        <position position="257"/>
    </location>
    <ligand>
        <name>Cu cation</name>
        <dbReference type="ChEBI" id="CHEBI:23378"/>
        <label>B</label>
    </ligand>
</feature>
<feature type="binding site" evidence="5 10">
    <location>
        <position position="258"/>
    </location>
    <ligand>
        <name>Cu cation</name>
        <dbReference type="ChEBI" id="CHEBI:23378"/>
        <label>B</label>
    </ligand>
</feature>
<feature type="binding site" description="axial binding residue" evidence="5 10">
    <location>
        <position position="345"/>
    </location>
    <ligand>
        <name>heme b</name>
        <dbReference type="ChEBI" id="CHEBI:60344"/>
        <label>2; high-spin</label>
    </ligand>
    <ligandPart>
        <name>Fe</name>
        <dbReference type="ChEBI" id="CHEBI:18248"/>
    </ligandPart>
</feature>
<feature type="binding site" description="axial binding residue" evidence="5 10">
    <location>
        <position position="347"/>
    </location>
    <ligand>
        <name>heme b</name>
        <dbReference type="ChEBI" id="CHEBI:60344"/>
        <label>1; low-spin</label>
    </ligand>
    <ligandPart>
        <name>Fe</name>
        <dbReference type="ChEBI" id="CHEBI:18248"/>
    </ligandPart>
</feature>
<feature type="helix" evidence="11">
    <location>
        <begin position="12"/>
        <end position="40"/>
    </location>
</feature>
<feature type="helix" evidence="11">
    <location>
        <begin position="42"/>
        <end position="45"/>
    </location>
</feature>
<feature type="turn" evidence="11">
    <location>
        <begin position="49"/>
        <end position="51"/>
    </location>
</feature>
<feature type="helix" evidence="11">
    <location>
        <begin position="53"/>
        <end position="65"/>
    </location>
</feature>
<feature type="helix" evidence="11">
    <location>
        <begin position="68"/>
        <end position="85"/>
    </location>
</feature>
<feature type="helix" evidence="11">
    <location>
        <begin position="92"/>
        <end position="112"/>
    </location>
</feature>
<feature type="turn" evidence="11">
    <location>
        <begin position="113"/>
        <end position="116"/>
    </location>
</feature>
<feature type="helix" evidence="11">
    <location>
        <begin position="128"/>
        <end position="150"/>
    </location>
</feature>
<feature type="strand" evidence="11">
    <location>
        <begin position="153"/>
        <end position="156"/>
    </location>
</feature>
<feature type="helix" evidence="11">
    <location>
        <begin position="159"/>
        <end position="178"/>
    </location>
</feature>
<feature type="strand" evidence="11">
    <location>
        <begin position="181"/>
        <end position="185"/>
    </location>
</feature>
<feature type="strand" evidence="11">
    <location>
        <begin position="188"/>
        <end position="192"/>
    </location>
</feature>
<feature type="helix" evidence="11">
    <location>
        <begin position="195"/>
        <end position="212"/>
    </location>
</feature>
<feature type="turn" evidence="11">
    <location>
        <begin position="213"/>
        <end position="215"/>
    </location>
</feature>
<feature type="helix" evidence="11">
    <location>
        <begin position="216"/>
        <end position="230"/>
    </location>
</feature>
<feature type="helix" evidence="11">
    <location>
        <begin position="237"/>
        <end position="250"/>
    </location>
</feature>
<feature type="helix" evidence="11">
    <location>
        <begin position="251"/>
        <end position="259"/>
    </location>
</feature>
<feature type="strand" evidence="11">
    <location>
        <begin position="262"/>
        <end position="264"/>
    </location>
</feature>
<feature type="helix" evidence="11">
    <location>
        <begin position="266"/>
        <end position="278"/>
    </location>
</feature>
<feature type="helix" evidence="11">
    <location>
        <begin position="280"/>
        <end position="291"/>
    </location>
</feature>
<feature type="helix" evidence="11">
    <location>
        <begin position="292"/>
        <end position="294"/>
    </location>
</feature>
<feature type="helix" evidence="11">
    <location>
        <begin position="297"/>
        <end position="299"/>
    </location>
</feature>
<feature type="helix" evidence="11">
    <location>
        <begin position="300"/>
        <end position="303"/>
    </location>
</feature>
<feature type="helix" evidence="11">
    <location>
        <begin position="305"/>
        <end position="327"/>
    </location>
</feature>
<feature type="helix" evidence="11">
    <location>
        <begin position="330"/>
        <end position="336"/>
    </location>
</feature>
<feature type="helix" evidence="11">
    <location>
        <begin position="340"/>
        <end position="352"/>
    </location>
</feature>
<feature type="helix" evidence="11">
    <location>
        <begin position="354"/>
        <end position="369"/>
    </location>
</feature>
<feature type="helix" evidence="11">
    <location>
        <begin position="379"/>
        <end position="411"/>
    </location>
</feature>
<feature type="strand" evidence="11">
    <location>
        <begin position="417"/>
        <end position="420"/>
    </location>
</feature>
<feature type="helix" evidence="11">
    <location>
        <begin position="423"/>
        <end position="429"/>
    </location>
</feature>
<feature type="helix" evidence="11">
    <location>
        <begin position="431"/>
        <end position="460"/>
    </location>
</feature>
<proteinExistence type="evidence at protein level"/>